<organism>
    <name type="scientific">Pseudomonas paraeruginosa (strain DSM 24068 / PA7)</name>
    <name type="common">Pseudomonas aeruginosa (strain PA7)</name>
    <dbReference type="NCBI Taxonomy" id="381754"/>
    <lineage>
        <taxon>Bacteria</taxon>
        <taxon>Pseudomonadati</taxon>
        <taxon>Pseudomonadota</taxon>
        <taxon>Gammaproteobacteria</taxon>
        <taxon>Pseudomonadales</taxon>
        <taxon>Pseudomonadaceae</taxon>
        <taxon>Pseudomonas</taxon>
        <taxon>Pseudomonas paraeruginosa</taxon>
    </lineage>
</organism>
<accession>A6VAU7</accession>
<gene>
    <name evidence="1" type="primary">dnaE2</name>
    <name type="ordered locus">PSPA7_4841</name>
</gene>
<protein>
    <recommendedName>
        <fullName evidence="1">Error-prone DNA polymerase</fullName>
        <ecNumber evidence="1">2.7.7.7</ecNumber>
    </recommendedName>
</protein>
<evidence type="ECO:0000255" key="1">
    <source>
        <dbReference type="HAMAP-Rule" id="MF_01902"/>
    </source>
</evidence>
<name>DNAE2_PSEP7</name>
<proteinExistence type="inferred from homology"/>
<reference key="1">
    <citation type="submission" date="2007-06" db="EMBL/GenBank/DDBJ databases">
        <authorList>
            <person name="Dodson R.J."/>
            <person name="Harkins D."/>
            <person name="Paulsen I.T."/>
        </authorList>
    </citation>
    <scope>NUCLEOTIDE SEQUENCE [LARGE SCALE GENOMIC DNA]</scope>
    <source>
        <strain>DSM 24068 / PA7</strain>
    </source>
</reference>
<comment type="function">
    <text evidence="1">DNA polymerase involved in damage-induced mutagenesis and translesion synthesis (TLS). It is not the major replicative DNA polymerase.</text>
</comment>
<comment type="catalytic activity">
    <reaction evidence="1">
        <text>DNA(n) + a 2'-deoxyribonucleoside 5'-triphosphate = DNA(n+1) + diphosphate</text>
        <dbReference type="Rhea" id="RHEA:22508"/>
        <dbReference type="Rhea" id="RHEA-COMP:17339"/>
        <dbReference type="Rhea" id="RHEA-COMP:17340"/>
        <dbReference type="ChEBI" id="CHEBI:33019"/>
        <dbReference type="ChEBI" id="CHEBI:61560"/>
        <dbReference type="ChEBI" id="CHEBI:173112"/>
        <dbReference type="EC" id="2.7.7.7"/>
    </reaction>
</comment>
<comment type="subcellular location">
    <subcellularLocation>
        <location evidence="1">Cytoplasm</location>
    </subcellularLocation>
</comment>
<comment type="similarity">
    <text evidence="1">Belongs to the DNA polymerase type-C family. DnaE2 subfamily.</text>
</comment>
<dbReference type="EC" id="2.7.7.7" evidence="1"/>
<dbReference type="EMBL" id="CP000744">
    <property type="protein sequence ID" value="ABR84074.1"/>
    <property type="molecule type" value="Genomic_DNA"/>
</dbReference>
<dbReference type="SMR" id="A6VAU7"/>
<dbReference type="KEGG" id="pap:PSPA7_4841"/>
<dbReference type="HOGENOM" id="CLU_001600_4_0_6"/>
<dbReference type="Proteomes" id="UP000001582">
    <property type="component" value="Chromosome"/>
</dbReference>
<dbReference type="GO" id="GO:0005737">
    <property type="term" value="C:cytoplasm"/>
    <property type="evidence" value="ECO:0007669"/>
    <property type="project" value="UniProtKB-SubCell"/>
</dbReference>
<dbReference type="GO" id="GO:0008408">
    <property type="term" value="F:3'-5' exonuclease activity"/>
    <property type="evidence" value="ECO:0007669"/>
    <property type="project" value="InterPro"/>
</dbReference>
<dbReference type="GO" id="GO:0003887">
    <property type="term" value="F:DNA-directed DNA polymerase activity"/>
    <property type="evidence" value="ECO:0007669"/>
    <property type="project" value="UniProtKB-UniRule"/>
</dbReference>
<dbReference type="GO" id="GO:0003676">
    <property type="term" value="F:nucleic acid binding"/>
    <property type="evidence" value="ECO:0007669"/>
    <property type="project" value="InterPro"/>
</dbReference>
<dbReference type="GO" id="GO:0006281">
    <property type="term" value="P:DNA repair"/>
    <property type="evidence" value="ECO:0007669"/>
    <property type="project" value="UniProtKB-UniRule"/>
</dbReference>
<dbReference type="GO" id="GO:0006260">
    <property type="term" value="P:DNA replication"/>
    <property type="evidence" value="ECO:0007669"/>
    <property type="project" value="UniProtKB-KW"/>
</dbReference>
<dbReference type="CDD" id="cd04485">
    <property type="entry name" value="DnaE_OBF"/>
    <property type="match status" value="1"/>
</dbReference>
<dbReference type="CDD" id="cd07434">
    <property type="entry name" value="PHP_PolIIIA_DnaE2"/>
    <property type="match status" value="1"/>
</dbReference>
<dbReference type="FunFam" id="1.10.150.870:FF:000002">
    <property type="entry name" value="Error-prone DNA polymerase"/>
    <property type="match status" value="1"/>
</dbReference>
<dbReference type="Gene3D" id="1.10.150.870">
    <property type="match status" value="1"/>
</dbReference>
<dbReference type="Gene3D" id="3.20.20.140">
    <property type="entry name" value="Metal-dependent hydrolases"/>
    <property type="match status" value="1"/>
</dbReference>
<dbReference type="HAMAP" id="MF_01902">
    <property type="entry name" value="DNApol_error_prone"/>
    <property type="match status" value="1"/>
</dbReference>
<dbReference type="InterPro" id="IPR011708">
    <property type="entry name" value="DNA_pol3_alpha_NTPase_dom"/>
</dbReference>
<dbReference type="InterPro" id="IPR040982">
    <property type="entry name" value="DNA_pol3_finger"/>
</dbReference>
<dbReference type="InterPro" id="IPR023073">
    <property type="entry name" value="DnaE2"/>
</dbReference>
<dbReference type="InterPro" id="IPR004805">
    <property type="entry name" value="DnaE2/DnaE/PolC"/>
</dbReference>
<dbReference type="InterPro" id="IPR029460">
    <property type="entry name" value="DNAPol_HHH"/>
</dbReference>
<dbReference type="InterPro" id="IPR004365">
    <property type="entry name" value="NA-bd_OB_tRNA"/>
</dbReference>
<dbReference type="InterPro" id="IPR004013">
    <property type="entry name" value="PHP_dom"/>
</dbReference>
<dbReference type="InterPro" id="IPR003141">
    <property type="entry name" value="Pol/His_phosphatase_N"/>
</dbReference>
<dbReference type="InterPro" id="IPR016195">
    <property type="entry name" value="Pol/histidinol_Pase-like"/>
</dbReference>
<dbReference type="NCBIfam" id="TIGR00594">
    <property type="entry name" value="polc"/>
    <property type="match status" value="1"/>
</dbReference>
<dbReference type="NCBIfam" id="NF004225">
    <property type="entry name" value="PRK05672.1"/>
    <property type="match status" value="1"/>
</dbReference>
<dbReference type="PANTHER" id="PTHR32294">
    <property type="entry name" value="DNA POLYMERASE III SUBUNIT ALPHA"/>
    <property type="match status" value="1"/>
</dbReference>
<dbReference type="PANTHER" id="PTHR32294:SF4">
    <property type="entry name" value="ERROR-PRONE DNA POLYMERASE"/>
    <property type="match status" value="1"/>
</dbReference>
<dbReference type="Pfam" id="PF07733">
    <property type="entry name" value="DNA_pol3_alpha"/>
    <property type="match status" value="1"/>
</dbReference>
<dbReference type="Pfam" id="PF17657">
    <property type="entry name" value="DNA_pol3_finger"/>
    <property type="match status" value="1"/>
</dbReference>
<dbReference type="Pfam" id="PF14579">
    <property type="entry name" value="HHH_6"/>
    <property type="match status" value="1"/>
</dbReference>
<dbReference type="Pfam" id="PF02811">
    <property type="entry name" value="PHP"/>
    <property type="match status" value="1"/>
</dbReference>
<dbReference type="Pfam" id="PF01336">
    <property type="entry name" value="tRNA_anti-codon"/>
    <property type="match status" value="1"/>
</dbReference>
<dbReference type="SMART" id="SM00481">
    <property type="entry name" value="POLIIIAc"/>
    <property type="match status" value="1"/>
</dbReference>
<dbReference type="SUPFAM" id="SSF89550">
    <property type="entry name" value="PHP domain-like"/>
    <property type="match status" value="1"/>
</dbReference>
<feature type="chain" id="PRO_1000070592" description="Error-prone DNA polymerase">
    <location>
        <begin position="1"/>
        <end position="1024"/>
    </location>
</feature>
<sequence>MSAYAELHCLSNFSFQRGASSAAELFARAARLGYRALAITDECSLAGIVRAWQAAREYRVKLLVGSEIRLEQGPKLVLLAEDLAGYQQLCRLITRGRRRADKGSYRLLREDLQPALDGVLAIWLAEPGDDDDAAWLGECFPQRLWLGVELHRGADDDARLRGLLALAARAQLPAVACGDVHMHCRGRRALQDCMTAIRNHLPVSEAGAHLFANGERHLRPLAALQGIYPEALLAETLRIAERCRFDLEQLKYQYPRELVPAGHDPASWLRRLTEKGIRRRWPDGASAKVREQIEKELKLISELGYESYFLTVQDIVGFARRQKILCQGRGSAANSAVCFALGITELDPERINLLFERFLSRERNEPPDIDVDFEHERREEVIQYVFNRYGRQRAALTAVVSTYHGAGAVRDVAKALGLPPDQVDALANCCGRWSDRAPSAERLMEAGFDPQSAVLRRVLALTGELVGFPRHLSQHPGGFVISEQPLDTLVPVENASMVERTVIQWDKDDLDAVGLLKVDVLALGMLSALRRSFDLLHELRGGERLSLASIPSEDPATYAMISRADTIGVFQIESRAQMAMLPRLRPEKFYDLVIQVAIVRPGPIQGDMVHPYLRRRNGEEPVAYPSVELEKVFERTLGVPLFQEQVMELAIVAADYSPGEADELRRSMAAWKRHGGLEHHRERLTRGMLANGYEADFAARIFEQIKGFGSYGFPESHAASFALLTYASSWLKRHEPAAFACALINSWPMGFYSPDQLLQDARRHAIQTRPVDVRHSRWDCSLEPIGQEQPAIRLGLRMIRGFREEDARRIEQARQAQSFTDVHDLGRRAGLDTRALELLADAGALRGLAGHRHKARWAIAGVEPQLPLFAEGPRIEEPAISLPLPSRGEELLSDYALLGTTLGPHPLKLLRVQLKARRCRASRELVGMEHGRPVRIAGLVVGRQRPQTASGVTFITLEDEFGMVNVVVWHDLAERQRRPFLESRLLQVEGTLESSSGVRHVIAGRLQDLTPLLTGLDVRSRDFH</sequence>
<keyword id="KW-0963">Cytoplasm</keyword>
<keyword id="KW-0227">DNA damage</keyword>
<keyword id="KW-0234">DNA repair</keyword>
<keyword id="KW-0235">DNA replication</keyword>
<keyword id="KW-0239">DNA-directed DNA polymerase</keyword>
<keyword id="KW-0548">Nucleotidyltransferase</keyword>
<keyword id="KW-0808">Transferase</keyword>